<protein>
    <recommendedName>
        <fullName>C-phycocyanin alpha subunit</fullName>
    </recommendedName>
</protein>
<sequence length="162" mass="17443">MKTPITEAIAAADTQGRFLSNTELQAVDGRFKRAVASMEAARALTNNAQSLIDGAAQAVYQKFPYTTTMQGSQYASTPEGKAKCARDIGYYLRMVTYCLVAGGTGPMDEYLIAGLSEINSTFDLSPSWYIEALKYIKANHGLTGQAAVEANAYIDYAINALS</sequence>
<dbReference type="EMBL" id="D13173">
    <property type="protein sequence ID" value="BAA02456.1"/>
    <property type="molecule type" value="Genomic_DNA"/>
</dbReference>
<dbReference type="EMBL" id="BA000039">
    <property type="protein sequence ID" value="BAC09510.1"/>
    <property type="molecule type" value="Genomic_DNA"/>
</dbReference>
<dbReference type="RefSeq" id="NP_682748.1">
    <property type="nucleotide sequence ID" value="NC_004113.1"/>
</dbReference>
<dbReference type="RefSeq" id="WP_011057793.1">
    <property type="nucleotide sequence ID" value="NC_004113.1"/>
</dbReference>
<dbReference type="PDB" id="1JBO">
    <property type="method" value="X-ray"/>
    <property type="resolution" value="1.45 A"/>
    <property type="chains" value="A=1-162"/>
</dbReference>
<dbReference type="PDB" id="1KTP">
    <property type="method" value="X-ray"/>
    <property type="resolution" value="1.60 A"/>
    <property type="chains" value="A=1-162"/>
</dbReference>
<dbReference type="PDB" id="3L0F">
    <property type="method" value="X-ray"/>
    <property type="resolution" value="1.35 A"/>
    <property type="chains" value="A=1-162"/>
</dbReference>
<dbReference type="PDB" id="4Q70">
    <property type="method" value="X-ray"/>
    <property type="resolution" value="1.85 A"/>
    <property type="chains" value="A=1-162"/>
</dbReference>
<dbReference type="PDB" id="4Z8K">
    <property type="method" value="X-ray"/>
    <property type="resolution" value="2.50 A"/>
    <property type="chains" value="A=1-162"/>
</dbReference>
<dbReference type="PDB" id="4ZIZ">
    <property type="method" value="X-ray"/>
    <property type="resolution" value="1.75 A"/>
    <property type="chains" value="A=1-162"/>
</dbReference>
<dbReference type="PDB" id="5MJM">
    <property type="method" value="X-ray"/>
    <property type="resolution" value="2.30 A"/>
    <property type="chains" value="A=1-162"/>
</dbReference>
<dbReference type="PDB" id="5MJP">
    <property type="method" value="X-ray"/>
    <property type="resolution" value="2.11 A"/>
    <property type="chains" value="A=1-162"/>
</dbReference>
<dbReference type="PDB" id="5MJQ">
    <property type="method" value="X-ray"/>
    <property type="resolution" value="2.70 A"/>
    <property type="chains" value="A=1-162"/>
</dbReference>
<dbReference type="PDB" id="5O7M">
    <property type="method" value="X-ray"/>
    <property type="resolution" value="2.46 A"/>
    <property type="chains" value="A=1-162"/>
</dbReference>
<dbReference type="PDB" id="5UVK">
    <property type="method" value="X-ray"/>
    <property type="resolution" value="3.10 A"/>
    <property type="chains" value="A=1-162"/>
</dbReference>
<dbReference type="PDB" id="6YPQ">
    <property type="method" value="X-ray"/>
    <property type="resolution" value="1.29 A"/>
    <property type="chains" value="A=1-162"/>
</dbReference>
<dbReference type="PDB" id="6YQ8">
    <property type="method" value="X-ray"/>
    <property type="resolution" value="1.82 A"/>
    <property type="chains" value="A=1-162"/>
</dbReference>
<dbReference type="PDB" id="6YQG">
    <property type="method" value="X-ray"/>
    <property type="resolution" value="1.45 A"/>
    <property type="chains" value="A=1-162"/>
</dbReference>
<dbReference type="PDB" id="6YYJ">
    <property type="method" value="X-ray"/>
    <property type="resolution" value="2.16 A"/>
    <property type="chains" value="A/C/E=1-162"/>
</dbReference>
<dbReference type="PDB" id="7S50">
    <property type="method" value="X-ray"/>
    <property type="resolution" value="2.10 A"/>
    <property type="chains" value="A=1-162"/>
</dbReference>
<dbReference type="PDB" id="7VEB">
    <property type="method" value="EM"/>
    <property type="resolution" value="4.20 A"/>
    <property type="chains" value="A/C/E/G/I/K/M/O/Q/S/U/W=1-162"/>
</dbReference>
<dbReference type="PDB" id="8FWA">
    <property type="method" value="X-ray"/>
    <property type="resolution" value="2.00 A"/>
    <property type="chains" value="A=1-162"/>
</dbReference>
<dbReference type="PDBsum" id="1JBO"/>
<dbReference type="PDBsum" id="1KTP"/>
<dbReference type="PDBsum" id="3L0F"/>
<dbReference type="PDBsum" id="4Q70"/>
<dbReference type="PDBsum" id="4Z8K"/>
<dbReference type="PDBsum" id="4ZIZ"/>
<dbReference type="PDBsum" id="5MJM"/>
<dbReference type="PDBsum" id="5MJP"/>
<dbReference type="PDBsum" id="5MJQ"/>
<dbReference type="PDBsum" id="5O7M"/>
<dbReference type="PDBsum" id="5UVK"/>
<dbReference type="PDBsum" id="6YPQ"/>
<dbReference type="PDBsum" id="6YQ8"/>
<dbReference type="PDBsum" id="6YQG"/>
<dbReference type="PDBsum" id="6YYJ"/>
<dbReference type="PDBsum" id="7S50"/>
<dbReference type="PDBsum" id="7VEB"/>
<dbReference type="PDBsum" id="8FWA"/>
<dbReference type="EMDB" id="EMD-31945"/>
<dbReference type="SMR" id="P50032"/>
<dbReference type="MINT" id="P50032"/>
<dbReference type="STRING" id="197221.gene:10748565"/>
<dbReference type="EnsemblBacteria" id="BAC09510">
    <property type="protein sequence ID" value="BAC09510"/>
    <property type="gene ID" value="BAC09510"/>
</dbReference>
<dbReference type="KEGG" id="tel:tlr1958"/>
<dbReference type="PATRIC" id="fig|197221.4.peg.2048"/>
<dbReference type="eggNOG" id="ENOG502Z85C">
    <property type="taxonomic scope" value="Bacteria"/>
</dbReference>
<dbReference type="EvolutionaryTrace" id="P50032"/>
<dbReference type="Proteomes" id="UP000000440">
    <property type="component" value="Chromosome"/>
</dbReference>
<dbReference type="GO" id="GO:0030089">
    <property type="term" value="C:phycobilisome"/>
    <property type="evidence" value="ECO:0007669"/>
    <property type="project" value="UniProtKB-KW"/>
</dbReference>
<dbReference type="GO" id="GO:0031676">
    <property type="term" value="C:plasma membrane-derived thylakoid membrane"/>
    <property type="evidence" value="ECO:0007669"/>
    <property type="project" value="UniProtKB-SubCell"/>
</dbReference>
<dbReference type="GO" id="GO:0015979">
    <property type="term" value="P:photosynthesis"/>
    <property type="evidence" value="ECO:0007669"/>
    <property type="project" value="UniProtKB-KW"/>
</dbReference>
<dbReference type="CDD" id="cd14770">
    <property type="entry name" value="PC-PEC_alpha"/>
    <property type="match status" value="1"/>
</dbReference>
<dbReference type="Gene3D" id="1.10.490.20">
    <property type="entry name" value="Phycocyanins"/>
    <property type="match status" value="1"/>
</dbReference>
<dbReference type="InterPro" id="IPR009050">
    <property type="entry name" value="Globin-like_sf"/>
</dbReference>
<dbReference type="InterPro" id="IPR012128">
    <property type="entry name" value="Phycobilisome_asu/bsu"/>
</dbReference>
<dbReference type="InterPro" id="IPR038719">
    <property type="entry name" value="Phycobilisome_asu/bsu_sf"/>
</dbReference>
<dbReference type="InterPro" id="IPR006246">
    <property type="entry name" value="Phycocyanin_a"/>
</dbReference>
<dbReference type="NCBIfam" id="TIGR01338">
    <property type="entry name" value="phycocy_alpha"/>
    <property type="match status" value="1"/>
</dbReference>
<dbReference type="PANTHER" id="PTHR34011:SF4">
    <property type="entry name" value="C-PHYCOCYANIN ALPHA SUBUNIT"/>
    <property type="match status" value="1"/>
</dbReference>
<dbReference type="PANTHER" id="PTHR34011">
    <property type="entry name" value="PHYCOBILISOME 32.1 KDA LINKER POLYPEPTIDE, PHYCOCYANIN-ASSOCIATED, ROD 2-RELATED"/>
    <property type="match status" value="1"/>
</dbReference>
<dbReference type="Pfam" id="PF00502">
    <property type="entry name" value="Phycobilisome"/>
    <property type="match status" value="1"/>
</dbReference>
<dbReference type="PIRSF" id="PIRSF000081">
    <property type="entry name" value="Phycocyanin"/>
    <property type="match status" value="1"/>
</dbReference>
<dbReference type="SUPFAM" id="SSF46458">
    <property type="entry name" value="Globin-like"/>
    <property type="match status" value="1"/>
</dbReference>
<gene>
    <name type="primary">cpcA</name>
    <name type="ordered locus">tlr1958</name>
</gene>
<proteinExistence type="evidence at protein level"/>
<accession>P50032</accession>
<reference key="1">
    <citation type="submission" date="1992-09" db="EMBL/GenBank/DDBJ databases">
        <title>Cloning and sequencing of the phycocyanin operon from the thermophilic cyanobacterium Synechococcus elongatus.</title>
        <authorList>
            <person name="Shimazu T."/>
            <person name="Soga M."/>
            <person name="Hirano M."/>
            <person name="Katoh S."/>
        </authorList>
    </citation>
    <scope>NUCLEOTIDE SEQUENCE [GENOMIC DNA]</scope>
</reference>
<reference key="2">
    <citation type="journal article" date="2002" name="DNA Res.">
        <title>Complete genome structure of the thermophilic cyanobacterium Thermosynechococcus elongatus BP-1.</title>
        <authorList>
            <person name="Nakamura Y."/>
            <person name="Kaneko T."/>
            <person name="Sato S."/>
            <person name="Ikeuchi M."/>
            <person name="Katoh H."/>
            <person name="Sasamoto S."/>
            <person name="Watanabe A."/>
            <person name="Iriguchi M."/>
            <person name="Kawashima K."/>
            <person name="Kimura T."/>
            <person name="Kishida Y."/>
            <person name="Kiyokawa C."/>
            <person name="Kohara M."/>
            <person name="Matsumoto M."/>
            <person name="Matsuno A."/>
            <person name="Nakazaki N."/>
            <person name="Shimpo S."/>
            <person name="Sugimoto M."/>
            <person name="Takeuchi C."/>
            <person name="Yamada M."/>
            <person name="Tabata S."/>
        </authorList>
    </citation>
    <scope>NUCLEOTIDE SEQUENCE [LARGE SCALE GENOMIC DNA]</scope>
    <source>
        <strain>NIES-2133 / IAM M-273 / BP-1</strain>
    </source>
</reference>
<reference evidence="9" key="3">
    <citation type="journal article" date="2002" name="Biochim. Biophys. Acta">
        <title>Refined structure of c-phycocyanin from the cyanobacterium Synechococcus vulcanus at 1.6 A: insights into the role of solvent molecules in thermal stability and co-factor structure.</title>
        <authorList>
            <person name="Adir N."/>
            <person name="Vainer R."/>
            <person name="Lerner N."/>
        </authorList>
    </citation>
    <scope>X-RAY CRYSTALLOGRAPHY (1.60 ANGSTROMS) IN COMPLEX WITH PHYCOCYANOBILIN CHROMOPHORE</scope>
    <scope>SUBUNIT</scope>
</reference>
<reference evidence="8" key="4">
    <citation type="journal article" date="2003" name="J. Struct. Biol.">
        <title>The 1.45 A three-dimensional structure of C-phycocyanin from the thermophilic cyanobacterium Synechococcus elongatus.</title>
        <authorList>
            <person name="Nield J."/>
            <person name="Rizkallah P.J."/>
            <person name="Barber J."/>
            <person name="Chayen N.E."/>
        </authorList>
    </citation>
    <scope>X-RAY CRYSTALLOGRAPHY (1.45 ANGSTROMS) IN COMPLEX WITH PHYCOCYANOBILIN CHROMOPHORE</scope>
    <scope>SUBUNIT</scope>
    <scope>SUBCELLULAR LOCATION</scope>
</reference>
<reference evidence="10" key="5">
    <citation type="submission" date="2009-12" db="PDB data bank">
        <title>The 3 dimensional structure of C-Phycocyanin at 1.35 A resolution.</title>
        <authorList>
            <person name="Fromme R."/>
            <person name="Brune D."/>
            <person name="Fromme P."/>
        </authorList>
    </citation>
    <scope>X-RAY CRYSTALLOGRAPHY (1.35 ANGSTROMS) IN COMPLEX WITH PHYCOCYANOBILIN CHROMOPHORE</scope>
    <scope>SUBUNIT</scope>
    <source>
        <strain>NIES-2133 / IAM M-273 / BP-1</strain>
    </source>
</reference>
<reference evidence="11" key="6">
    <citation type="submission" date="2014-04" db="PDB data bank">
        <title>Observations on the Light Harvesting Protein Phycocyanin structure in high resolution using a femtosecond X-Ray laser.</title>
        <authorList>
            <person name="Fromme R."/>
            <person name="Roy-Chowdhury S."/>
            <person name="Basu S."/>
            <person name="Yoon C."/>
            <person name="Brune D."/>
            <person name="Fromme P."/>
        </authorList>
    </citation>
    <scope>X-RAY CRYSTALLOGRAPHY (1.85 ANGSTROMS) IN COMPLEX WITH PHYCOCYANOBILIN CHROMOPHORE</scope>
    <scope>SUBUNIT</scope>
    <source>
        <strain>NIES-2133 / IAM M-273 / BP-1</strain>
    </source>
</reference>
<reference evidence="12" key="7">
    <citation type="journal article" date="2015" name="IUCrJ">
        <title>A novel inert crystal delivery medium for serial femtosecond crystallography.</title>
        <authorList>
            <person name="Conrad C.E."/>
            <person name="Basu S."/>
            <person name="James D."/>
            <person name="Wang D."/>
            <person name="Schaffer A."/>
            <person name="Roy-Chowdhury S."/>
            <person name="Zatsepin N.A."/>
            <person name="Aquila A."/>
            <person name="Coe J."/>
            <person name="Gati C."/>
            <person name="Hunter M.S."/>
            <person name="Koglin J.E."/>
            <person name="Kupitz C."/>
            <person name="Nelson G."/>
            <person name="Subramanian G."/>
            <person name="White T.A."/>
            <person name="Zhao Y."/>
            <person name="Zook J."/>
            <person name="Boutet S."/>
            <person name="Cherezov V."/>
            <person name="Spence J.C."/>
            <person name="Fromme R."/>
            <person name="Weierstall U."/>
            <person name="Fromme P."/>
        </authorList>
    </citation>
    <scope>X-RAY CRYSTALLOGRAPHY (2.50 ANGSTROMS) IN COMPLEX WITH PHYCOCYANOBILIN CHROMOPHORE</scope>
    <scope>SUBUNIT</scope>
    <source>
        <strain>NIES-2133 / IAM M-273 / BP-1</strain>
    </source>
</reference>
<reference evidence="13" key="8">
    <citation type="journal article" date="2015" name="IUCrJ">
        <title>Serial femtosecond crystallography of soluble proteins in lipidic cubic phase.</title>
        <authorList>
            <person name="Fromme R."/>
            <person name="Ishchenko A."/>
            <person name="Metz M."/>
            <person name="Chowdhury S.R."/>
            <person name="Basu S."/>
            <person name="Boutet S."/>
            <person name="Fromme P."/>
            <person name="White T.A."/>
            <person name="Barty A."/>
            <person name="Spence J.C."/>
            <person name="Weierstall U."/>
            <person name="Liu W."/>
            <person name="Cherezov V."/>
        </authorList>
    </citation>
    <scope>X-RAY CRYSTALLOGRAPHY (1.75 ANGSTROMS) IN COMPLEX WITH PHYCOCYANOBILIN CHROMOPHORE</scope>
    <scope>SUBUNIT</scope>
    <scope>SUBCELLULAR LOCATION</scope>
    <source>
        <strain>NIES-2133 / IAM M-273 / BP-1</strain>
    </source>
</reference>
<reference evidence="18" key="9">
    <citation type="journal article" date="2017" name="IUCrJ">
        <title>Serial millisecond crystallography of membrane and soluble protein microcrystals using synchrotron radiation.</title>
        <authorList>
            <person name="Martin-Garcia J.M."/>
            <person name="Conrad C.E."/>
            <person name="Nelson G."/>
            <person name="Stander N."/>
            <person name="Zatsepin N.A."/>
            <person name="Zook J."/>
            <person name="Zhu L."/>
            <person name="Geiger J."/>
            <person name="Chun E."/>
            <person name="Kissick D."/>
            <person name="Hilgart M.C."/>
            <person name="Ogata C."/>
            <person name="Ishchenko A."/>
            <person name="Nagaratnam N."/>
            <person name="Roy-Chowdhury S."/>
            <person name="Coe J."/>
            <person name="Subramanian G."/>
            <person name="Schaffer A."/>
            <person name="James D."/>
            <person name="Ketwala G."/>
            <person name="Venugopalan N."/>
            <person name="Xu S."/>
            <person name="Corcoran S."/>
            <person name="Ferguson D."/>
            <person name="Weierstall U."/>
            <person name="Spence J.C.H."/>
            <person name="Cherezov V."/>
            <person name="Fromme P."/>
            <person name="Fischetti R.F."/>
            <person name="Liu W."/>
        </authorList>
    </citation>
    <scope>X-RAY CRYSTALLOGRAPHY (3.10 ANGSTROMS) IN COMPLEX WITH PHYCOCYANOBILIN CHROMOPHORE</scope>
    <scope>SUBUNIT</scope>
    <source>
        <strain>NIES-2133 / IAM M-273 / BP-1</strain>
    </source>
</reference>
<reference evidence="14 15 16 17" key="10">
    <citation type="journal article" date="2017" name="Nat. Commun.">
        <title>Pink-beam serial crystallography.</title>
        <authorList>
            <person name="Meents A."/>
            <person name="Wiedorn M.O."/>
            <person name="Srajer V."/>
            <person name="Henning R."/>
            <person name="Sarrou I."/>
            <person name="Bergtholdt J."/>
            <person name="Barthelmess M."/>
            <person name="Reinke P.Y.A."/>
            <person name="Dierksmeyer D."/>
            <person name="Tolstikova A."/>
            <person name="Schaible S."/>
            <person name="Messerschmidt M."/>
            <person name="Ogata C.M."/>
            <person name="Kissick D.J."/>
            <person name="Taft M.H."/>
            <person name="Manstein D.J."/>
            <person name="Lieske J."/>
            <person name="Oberthuer D."/>
            <person name="Fischetti R.F."/>
            <person name="Chapman H.N."/>
        </authorList>
    </citation>
    <scope>X-RAY CRYSTALLOGRAPHY (2.11 ANGSTROMS) IN COMPLEX WITH PHYCOCYANOBILIN CHROMOPHORE</scope>
    <scope>SUBUNIT</scope>
    <source>
        <strain>NIES-2133 / IAM M-273 / BP-1</strain>
    </source>
</reference>
<evidence type="ECO:0000250" key="1"/>
<evidence type="ECO:0000269" key="2">
    <source>
    </source>
</evidence>
<evidence type="ECO:0000269" key="3">
    <source>
    </source>
</evidence>
<evidence type="ECO:0000269" key="4">
    <source>
    </source>
</evidence>
<evidence type="ECO:0000269" key="5">
    <source>
    </source>
</evidence>
<evidence type="ECO:0000269" key="6">
    <source>
    </source>
</evidence>
<evidence type="ECO:0000305" key="7"/>
<evidence type="ECO:0007744" key="8">
    <source>
        <dbReference type="PDB" id="1JBO"/>
    </source>
</evidence>
<evidence type="ECO:0007744" key="9">
    <source>
        <dbReference type="PDB" id="1KTP"/>
    </source>
</evidence>
<evidence type="ECO:0007744" key="10">
    <source>
        <dbReference type="PDB" id="3L0F"/>
    </source>
</evidence>
<evidence type="ECO:0007744" key="11">
    <source>
        <dbReference type="PDB" id="4Q70"/>
    </source>
</evidence>
<evidence type="ECO:0007744" key="12">
    <source>
        <dbReference type="PDB" id="4Z8K"/>
    </source>
</evidence>
<evidence type="ECO:0007744" key="13">
    <source>
        <dbReference type="PDB" id="4ZIZ"/>
    </source>
</evidence>
<evidence type="ECO:0007744" key="14">
    <source>
        <dbReference type="PDB" id="5MJM"/>
    </source>
</evidence>
<evidence type="ECO:0007744" key="15">
    <source>
        <dbReference type="PDB" id="5MJP"/>
    </source>
</evidence>
<evidence type="ECO:0007744" key="16">
    <source>
        <dbReference type="PDB" id="5MJQ"/>
    </source>
</evidence>
<evidence type="ECO:0007744" key="17">
    <source>
        <dbReference type="PDB" id="5O7M"/>
    </source>
</evidence>
<evidence type="ECO:0007744" key="18">
    <source>
        <dbReference type="PDB" id="5UVK"/>
    </source>
</evidence>
<evidence type="ECO:0007829" key="19">
    <source>
        <dbReference type="PDB" id="6YPQ"/>
    </source>
</evidence>
<keyword id="KW-0002">3D-structure</keyword>
<keyword id="KW-0042">Antenna complex</keyword>
<keyword id="KW-0089">Bile pigment</keyword>
<keyword id="KW-0157">Chromophore</keyword>
<keyword id="KW-0249">Electron transport</keyword>
<keyword id="KW-0472">Membrane</keyword>
<keyword id="KW-0602">Photosynthesis</keyword>
<keyword id="KW-0605">Phycobilisome</keyword>
<keyword id="KW-1185">Reference proteome</keyword>
<keyword id="KW-0793">Thylakoid</keyword>
<keyword id="KW-0813">Transport</keyword>
<feature type="chain" id="PRO_0000199128" description="C-phycocyanin alpha subunit">
    <location>
        <begin position="1"/>
        <end position="162"/>
    </location>
</feature>
<feature type="binding site" description="covalent" evidence="8 9 10 11 12 13 14 15 16 17 18">
    <location>
        <position position="84"/>
    </location>
    <ligand>
        <name>(2R,3E)-phycocyanobilin</name>
        <dbReference type="ChEBI" id="CHEBI:85275"/>
    </ligand>
</feature>
<feature type="helix" evidence="19">
    <location>
        <begin position="4"/>
        <end position="14"/>
    </location>
</feature>
<feature type="helix" evidence="19">
    <location>
        <begin position="21"/>
        <end position="46"/>
    </location>
</feature>
<feature type="helix" evidence="19">
    <location>
        <begin position="48"/>
        <end position="62"/>
    </location>
</feature>
<feature type="helix" evidence="19">
    <location>
        <begin position="64"/>
        <end position="67"/>
    </location>
</feature>
<feature type="strand" evidence="19">
    <location>
        <begin position="74"/>
        <end position="77"/>
    </location>
</feature>
<feature type="helix" evidence="19">
    <location>
        <begin position="78"/>
        <end position="101"/>
    </location>
</feature>
<feature type="helix" evidence="19">
    <location>
        <begin position="105"/>
        <end position="110"/>
    </location>
</feature>
<feature type="turn" evidence="19">
    <location>
        <begin position="111"/>
        <end position="114"/>
    </location>
</feature>
<feature type="helix" evidence="19">
    <location>
        <begin position="115"/>
        <end position="122"/>
    </location>
</feature>
<feature type="helix" evidence="19">
    <location>
        <begin position="126"/>
        <end position="139"/>
    </location>
</feature>
<feature type="helix" evidence="19">
    <location>
        <begin position="144"/>
        <end position="160"/>
    </location>
</feature>
<comment type="function">
    <text>Light-harvesting photosynthetic bile pigment-protein from the phycobiliprotein complex (phycobilisome, PBS). Phycocyanin is the major phycobiliprotein in the PBS rod.</text>
</comment>
<comment type="subunit">
    <text evidence="2 3 7 8 9 10 11 12 13 18">Heterodimer of an alpha and a beta subunit, which further assembles into trimers (PubMed:12460674, PubMed:12615541). The trimers assemble into hexamers (Probable).</text>
</comment>
<comment type="subcellular location">
    <subcellularLocation>
        <location evidence="5">Cellular thylakoid membrane</location>
        <topology evidence="5">Peripheral membrane protein</topology>
        <orientation evidence="1">Cytoplasmic side</orientation>
    </subcellularLocation>
    <text evidence="3 5">Part of the phycobilisome rod.</text>
</comment>
<comment type="PTM">
    <text evidence="2 3 4 5 6 8 9 10 11 12 13 18">Contains one covalently linked phycocyanobilin chromophore.</text>
</comment>
<comment type="similarity">
    <text evidence="7">Belongs to the phycobiliprotein family.</text>
</comment>
<name>PHCA_THEVB</name>
<organism>
    <name type="scientific">Thermosynechococcus vestitus (strain NIES-2133 / IAM M-273 / BP-1)</name>
    <dbReference type="NCBI Taxonomy" id="197221"/>
    <lineage>
        <taxon>Bacteria</taxon>
        <taxon>Bacillati</taxon>
        <taxon>Cyanobacteriota</taxon>
        <taxon>Cyanophyceae</taxon>
        <taxon>Acaryochloridales</taxon>
        <taxon>Thermosynechococcaceae</taxon>
        <taxon>Thermosynechococcus</taxon>
    </lineage>
</organism>